<organism>
    <name type="scientific">Pseudomonas savastanoi pv. phaseolicola (strain 1448A / Race 6)</name>
    <name type="common">Pseudomonas syringae pv. phaseolicola (strain 1448A / Race 6)</name>
    <dbReference type="NCBI Taxonomy" id="264730"/>
    <lineage>
        <taxon>Bacteria</taxon>
        <taxon>Pseudomonadati</taxon>
        <taxon>Pseudomonadota</taxon>
        <taxon>Gammaproteobacteria</taxon>
        <taxon>Pseudomonadales</taxon>
        <taxon>Pseudomonadaceae</taxon>
        <taxon>Pseudomonas</taxon>
    </lineage>
</organism>
<reference key="1">
    <citation type="journal article" date="2005" name="J. Bacteriol.">
        <title>Whole-genome sequence analysis of Pseudomonas syringae pv. phaseolicola 1448A reveals divergence among pathovars in genes involved in virulence and transposition.</title>
        <authorList>
            <person name="Joardar V."/>
            <person name="Lindeberg M."/>
            <person name="Jackson R.W."/>
            <person name="Selengut J."/>
            <person name="Dodson R."/>
            <person name="Brinkac L.M."/>
            <person name="Daugherty S.C."/>
            <person name="DeBoy R.T."/>
            <person name="Durkin A.S."/>
            <person name="Gwinn Giglio M."/>
            <person name="Madupu R."/>
            <person name="Nelson W.C."/>
            <person name="Rosovitz M.J."/>
            <person name="Sullivan S.A."/>
            <person name="Crabtree J."/>
            <person name="Creasy T."/>
            <person name="Davidsen T.M."/>
            <person name="Haft D.H."/>
            <person name="Zafar N."/>
            <person name="Zhou L."/>
            <person name="Halpin R."/>
            <person name="Holley T."/>
            <person name="Khouri H.M."/>
            <person name="Feldblyum T.V."/>
            <person name="White O."/>
            <person name="Fraser C.M."/>
            <person name="Chatterjee A.K."/>
            <person name="Cartinhour S."/>
            <person name="Schneider D."/>
            <person name="Mansfield J.W."/>
            <person name="Collmer A."/>
            <person name="Buell R."/>
        </authorList>
    </citation>
    <scope>NUCLEOTIDE SEQUENCE [LARGE SCALE GENOMIC DNA]</scope>
    <source>
        <strain>1448A / Race 6</strain>
    </source>
</reference>
<keyword id="KW-0119">Carbohydrate metabolism</keyword>
<keyword id="KW-0963">Cytoplasm</keyword>
<keyword id="KW-0378">Hydrolase</keyword>
<keyword id="KW-0460">Magnesium</keyword>
<keyword id="KW-0479">Metal-binding</keyword>
<dbReference type="EC" id="3.1.3.11" evidence="1"/>
<dbReference type="EMBL" id="CP000058">
    <property type="protein sequence ID" value="AAZ34733.1"/>
    <property type="molecule type" value="Genomic_DNA"/>
</dbReference>
<dbReference type="RefSeq" id="WP_004666507.1">
    <property type="nucleotide sequence ID" value="NC_005773.3"/>
</dbReference>
<dbReference type="SMR" id="Q48PL3"/>
<dbReference type="KEGG" id="psp:PSPPH_0353"/>
<dbReference type="eggNOG" id="COG0158">
    <property type="taxonomic scope" value="Bacteria"/>
</dbReference>
<dbReference type="HOGENOM" id="CLU_039977_0_0_6"/>
<dbReference type="UniPathway" id="UPA00138"/>
<dbReference type="Proteomes" id="UP000000551">
    <property type="component" value="Chromosome"/>
</dbReference>
<dbReference type="GO" id="GO:0005829">
    <property type="term" value="C:cytosol"/>
    <property type="evidence" value="ECO:0007669"/>
    <property type="project" value="TreeGrafter"/>
</dbReference>
<dbReference type="GO" id="GO:0042132">
    <property type="term" value="F:fructose 1,6-bisphosphate 1-phosphatase activity"/>
    <property type="evidence" value="ECO:0007669"/>
    <property type="project" value="UniProtKB-UniRule"/>
</dbReference>
<dbReference type="GO" id="GO:0000287">
    <property type="term" value="F:magnesium ion binding"/>
    <property type="evidence" value="ECO:0007669"/>
    <property type="project" value="UniProtKB-UniRule"/>
</dbReference>
<dbReference type="GO" id="GO:0030388">
    <property type="term" value="P:fructose 1,6-bisphosphate metabolic process"/>
    <property type="evidence" value="ECO:0007669"/>
    <property type="project" value="TreeGrafter"/>
</dbReference>
<dbReference type="GO" id="GO:0006002">
    <property type="term" value="P:fructose 6-phosphate metabolic process"/>
    <property type="evidence" value="ECO:0007669"/>
    <property type="project" value="TreeGrafter"/>
</dbReference>
<dbReference type="GO" id="GO:0006000">
    <property type="term" value="P:fructose metabolic process"/>
    <property type="evidence" value="ECO:0007669"/>
    <property type="project" value="TreeGrafter"/>
</dbReference>
<dbReference type="GO" id="GO:0006094">
    <property type="term" value="P:gluconeogenesis"/>
    <property type="evidence" value="ECO:0007669"/>
    <property type="project" value="UniProtKB-UniRule"/>
</dbReference>
<dbReference type="GO" id="GO:0005986">
    <property type="term" value="P:sucrose biosynthetic process"/>
    <property type="evidence" value="ECO:0007669"/>
    <property type="project" value="TreeGrafter"/>
</dbReference>
<dbReference type="CDD" id="cd00354">
    <property type="entry name" value="FBPase"/>
    <property type="match status" value="1"/>
</dbReference>
<dbReference type="FunFam" id="3.30.540.10:FF:000006">
    <property type="entry name" value="Fructose-1,6-bisphosphatase class 1"/>
    <property type="match status" value="1"/>
</dbReference>
<dbReference type="FunFam" id="3.40.190.80:FF:000011">
    <property type="entry name" value="Fructose-1,6-bisphosphatase class 1"/>
    <property type="match status" value="1"/>
</dbReference>
<dbReference type="Gene3D" id="3.40.190.80">
    <property type="match status" value="1"/>
</dbReference>
<dbReference type="Gene3D" id="3.30.540.10">
    <property type="entry name" value="Fructose-1,6-Bisphosphatase, subunit A, domain 1"/>
    <property type="match status" value="1"/>
</dbReference>
<dbReference type="HAMAP" id="MF_01855">
    <property type="entry name" value="FBPase_class1"/>
    <property type="match status" value="1"/>
</dbReference>
<dbReference type="InterPro" id="IPR044015">
    <property type="entry name" value="FBPase_C_dom"/>
</dbReference>
<dbReference type="InterPro" id="IPR000146">
    <property type="entry name" value="FBPase_class-1"/>
</dbReference>
<dbReference type="InterPro" id="IPR033391">
    <property type="entry name" value="FBPase_N"/>
</dbReference>
<dbReference type="InterPro" id="IPR028343">
    <property type="entry name" value="FBPtase"/>
</dbReference>
<dbReference type="NCBIfam" id="NF006778">
    <property type="entry name" value="PRK09293.1-1"/>
    <property type="match status" value="1"/>
</dbReference>
<dbReference type="NCBIfam" id="NF006779">
    <property type="entry name" value="PRK09293.1-3"/>
    <property type="match status" value="1"/>
</dbReference>
<dbReference type="NCBIfam" id="NF006780">
    <property type="entry name" value="PRK09293.1-4"/>
    <property type="match status" value="1"/>
</dbReference>
<dbReference type="PANTHER" id="PTHR11556">
    <property type="entry name" value="FRUCTOSE-1,6-BISPHOSPHATASE-RELATED"/>
    <property type="match status" value="1"/>
</dbReference>
<dbReference type="PANTHER" id="PTHR11556:SF35">
    <property type="entry name" value="SEDOHEPTULOSE-1,7-BISPHOSPHATASE, CHLOROPLASTIC"/>
    <property type="match status" value="1"/>
</dbReference>
<dbReference type="Pfam" id="PF00316">
    <property type="entry name" value="FBPase"/>
    <property type="match status" value="1"/>
</dbReference>
<dbReference type="Pfam" id="PF18913">
    <property type="entry name" value="FBPase_C"/>
    <property type="match status" value="1"/>
</dbReference>
<dbReference type="PIRSF" id="PIRSF500210">
    <property type="entry name" value="FBPtase"/>
    <property type="match status" value="1"/>
</dbReference>
<dbReference type="PIRSF" id="PIRSF000904">
    <property type="entry name" value="FBPtase_SBPase"/>
    <property type="match status" value="1"/>
</dbReference>
<dbReference type="PRINTS" id="PR00115">
    <property type="entry name" value="F16BPHPHTASE"/>
</dbReference>
<dbReference type="SUPFAM" id="SSF56655">
    <property type="entry name" value="Carbohydrate phosphatase"/>
    <property type="match status" value="1"/>
</dbReference>
<feature type="chain" id="PRO_0000364653" description="Fructose-1,6-bisphosphatase class 1">
    <location>
        <begin position="1"/>
        <end position="336"/>
    </location>
</feature>
<feature type="binding site" evidence="1">
    <location>
        <position position="90"/>
    </location>
    <ligand>
        <name>Mg(2+)</name>
        <dbReference type="ChEBI" id="CHEBI:18420"/>
        <label>1</label>
    </ligand>
</feature>
<feature type="binding site" evidence="1">
    <location>
        <position position="112"/>
    </location>
    <ligand>
        <name>Mg(2+)</name>
        <dbReference type="ChEBI" id="CHEBI:18420"/>
        <label>1</label>
    </ligand>
</feature>
<feature type="binding site" evidence="1">
    <location>
        <position position="112"/>
    </location>
    <ligand>
        <name>Mg(2+)</name>
        <dbReference type="ChEBI" id="CHEBI:18420"/>
        <label>2</label>
    </ligand>
</feature>
<feature type="binding site" evidence="1">
    <location>
        <position position="114"/>
    </location>
    <ligand>
        <name>Mg(2+)</name>
        <dbReference type="ChEBI" id="CHEBI:18420"/>
        <label>1</label>
    </ligand>
</feature>
<feature type="binding site" evidence="1">
    <location>
        <begin position="115"/>
        <end position="118"/>
    </location>
    <ligand>
        <name>substrate</name>
    </ligand>
</feature>
<feature type="binding site" evidence="1">
    <location>
        <position position="115"/>
    </location>
    <ligand>
        <name>Mg(2+)</name>
        <dbReference type="ChEBI" id="CHEBI:18420"/>
        <label>2</label>
    </ligand>
</feature>
<feature type="binding site" evidence="1">
    <location>
        <position position="211"/>
    </location>
    <ligand>
        <name>substrate</name>
    </ligand>
</feature>
<feature type="binding site" evidence="1">
    <location>
        <position position="277"/>
    </location>
    <ligand>
        <name>substrate</name>
    </ligand>
</feature>
<feature type="binding site" evidence="1">
    <location>
        <position position="283"/>
    </location>
    <ligand>
        <name>Mg(2+)</name>
        <dbReference type="ChEBI" id="CHEBI:18420"/>
        <label>2</label>
    </ligand>
</feature>
<name>F16PA_PSE14</name>
<evidence type="ECO:0000255" key="1">
    <source>
        <dbReference type="HAMAP-Rule" id="MF_01855"/>
    </source>
</evidence>
<accession>Q48PL3</accession>
<protein>
    <recommendedName>
        <fullName evidence="1">Fructose-1,6-bisphosphatase class 1</fullName>
        <shortName evidence="1">FBPase class 1</shortName>
        <ecNumber evidence="1">3.1.3.11</ecNumber>
    </recommendedName>
    <alternativeName>
        <fullName evidence="1">D-fructose-1,6-bisphosphate 1-phosphohydrolase class 1</fullName>
    </alternativeName>
</protein>
<comment type="catalytic activity">
    <reaction evidence="1">
        <text>beta-D-fructose 1,6-bisphosphate + H2O = beta-D-fructose 6-phosphate + phosphate</text>
        <dbReference type="Rhea" id="RHEA:11064"/>
        <dbReference type="ChEBI" id="CHEBI:15377"/>
        <dbReference type="ChEBI" id="CHEBI:32966"/>
        <dbReference type="ChEBI" id="CHEBI:43474"/>
        <dbReference type="ChEBI" id="CHEBI:57634"/>
        <dbReference type="EC" id="3.1.3.11"/>
    </reaction>
</comment>
<comment type="cofactor">
    <cofactor evidence="1">
        <name>Mg(2+)</name>
        <dbReference type="ChEBI" id="CHEBI:18420"/>
    </cofactor>
    <text evidence="1">Binds 2 magnesium ions per subunit.</text>
</comment>
<comment type="pathway">
    <text evidence="1">Carbohydrate biosynthesis; gluconeogenesis.</text>
</comment>
<comment type="subunit">
    <text evidence="1">Homotetramer.</text>
</comment>
<comment type="subcellular location">
    <subcellularLocation>
        <location evidence="1">Cytoplasm</location>
    </subcellularLocation>
</comment>
<comment type="similarity">
    <text evidence="1">Belongs to the FBPase class 1 family.</text>
</comment>
<sequence length="336" mass="37202">MSRVTLSRYLIEQTRSNNTPADLRFLIEVVARACKEISHAVSKGALGGVLGSMGTENVQGEVQKKLDVISNEILLEANEWGGHLAGMASEEMDNAYQIPGKYPKGAYLLVFDPLDGSSNIDINAPVGTIFSVLRCPNEYLSQNEALNEKAFLQPGTEQVAAGYAIYGPQTMLVLTLGDGVKGFTLDREMGSFVLTHEDIKIPESTQEFAINMSNQRHWEAPVQRYVNELLAGEEGPLKKNYNMRWVAAMVADVHRILTRGGLFMYPRDSREPSKPGKLRLMYEANPMSFLVEQAGGASTDGHQRILDIQPEGLHQRVAVYLGSKEEVERATAYHKE</sequence>
<gene>
    <name evidence="1" type="primary">fbp</name>
    <name type="ordered locus">PSPPH_0353</name>
</gene>
<proteinExistence type="inferred from homology"/>